<proteinExistence type="inferred from homology"/>
<dbReference type="EC" id="1.4.4.2" evidence="1"/>
<dbReference type="EMBL" id="CU928160">
    <property type="protein sequence ID" value="CAQ99837.1"/>
    <property type="molecule type" value="Genomic_DNA"/>
</dbReference>
<dbReference type="RefSeq" id="WP_000195058.1">
    <property type="nucleotide sequence ID" value="NC_011741.1"/>
</dbReference>
<dbReference type="SMR" id="B7LYG7"/>
<dbReference type="KEGG" id="ecr:ECIAI1_3022"/>
<dbReference type="HOGENOM" id="CLU_004620_1_1_6"/>
<dbReference type="GO" id="GO:0005829">
    <property type="term" value="C:cytosol"/>
    <property type="evidence" value="ECO:0007669"/>
    <property type="project" value="TreeGrafter"/>
</dbReference>
<dbReference type="GO" id="GO:0005960">
    <property type="term" value="C:glycine cleavage complex"/>
    <property type="evidence" value="ECO:0007669"/>
    <property type="project" value="TreeGrafter"/>
</dbReference>
<dbReference type="GO" id="GO:0016594">
    <property type="term" value="F:glycine binding"/>
    <property type="evidence" value="ECO:0007669"/>
    <property type="project" value="TreeGrafter"/>
</dbReference>
<dbReference type="GO" id="GO:0004375">
    <property type="term" value="F:glycine dehydrogenase (decarboxylating) activity"/>
    <property type="evidence" value="ECO:0007669"/>
    <property type="project" value="UniProtKB-EC"/>
</dbReference>
<dbReference type="GO" id="GO:0030170">
    <property type="term" value="F:pyridoxal phosphate binding"/>
    <property type="evidence" value="ECO:0007669"/>
    <property type="project" value="TreeGrafter"/>
</dbReference>
<dbReference type="GO" id="GO:0019464">
    <property type="term" value="P:glycine decarboxylation via glycine cleavage system"/>
    <property type="evidence" value="ECO:0007669"/>
    <property type="project" value="UniProtKB-UniRule"/>
</dbReference>
<dbReference type="CDD" id="cd00613">
    <property type="entry name" value="GDC-P"/>
    <property type="match status" value="2"/>
</dbReference>
<dbReference type="FunFam" id="3.40.640.10:FF:000005">
    <property type="entry name" value="Glycine dehydrogenase (decarboxylating), mitochondrial"/>
    <property type="match status" value="1"/>
</dbReference>
<dbReference type="FunFam" id="3.90.1150.10:FF:000007">
    <property type="entry name" value="Glycine dehydrogenase (decarboxylating), mitochondrial"/>
    <property type="match status" value="1"/>
</dbReference>
<dbReference type="FunFam" id="3.40.640.10:FF:000007">
    <property type="entry name" value="glycine dehydrogenase (Decarboxylating), mitochondrial"/>
    <property type="match status" value="1"/>
</dbReference>
<dbReference type="Gene3D" id="3.90.1150.10">
    <property type="entry name" value="Aspartate Aminotransferase, domain 1"/>
    <property type="match status" value="1"/>
</dbReference>
<dbReference type="Gene3D" id="3.40.640.10">
    <property type="entry name" value="Type I PLP-dependent aspartate aminotransferase-like (Major domain)"/>
    <property type="match status" value="2"/>
</dbReference>
<dbReference type="HAMAP" id="MF_00711">
    <property type="entry name" value="GcvP"/>
    <property type="match status" value="1"/>
</dbReference>
<dbReference type="InterPro" id="IPR003437">
    <property type="entry name" value="GcvP"/>
</dbReference>
<dbReference type="InterPro" id="IPR049316">
    <property type="entry name" value="GDC-P_C"/>
</dbReference>
<dbReference type="InterPro" id="IPR049315">
    <property type="entry name" value="GDC-P_N"/>
</dbReference>
<dbReference type="InterPro" id="IPR020581">
    <property type="entry name" value="GDC_P"/>
</dbReference>
<dbReference type="InterPro" id="IPR015424">
    <property type="entry name" value="PyrdxlP-dep_Trfase"/>
</dbReference>
<dbReference type="InterPro" id="IPR015421">
    <property type="entry name" value="PyrdxlP-dep_Trfase_major"/>
</dbReference>
<dbReference type="InterPro" id="IPR015422">
    <property type="entry name" value="PyrdxlP-dep_Trfase_small"/>
</dbReference>
<dbReference type="NCBIfam" id="TIGR00461">
    <property type="entry name" value="gcvP"/>
    <property type="match status" value="1"/>
</dbReference>
<dbReference type="NCBIfam" id="NF003346">
    <property type="entry name" value="PRK04366.1"/>
    <property type="match status" value="1"/>
</dbReference>
<dbReference type="PANTHER" id="PTHR11773:SF13">
    <property type="entry name" value="GLYCINE DEHYDROGENASE (DECARBOXYLATING)"/>
    <property type="match status" value="1"/>
</dbReference>
<dbReference type="PANTHER" id="PTHR11773">
    <property type="entry name" value="GLYCINE DEHYDROGENASE, DECARBOXYLATING"/>
    <property type="match status" value="1"/>
</dbReference>
<dbReference type="Pfam" id="PF21478">
    <property type="entry name" value="GcvP2_C"/>
    <property type="match status" value="1"/>
</dbReference>
<dbReference type="Pfam" id="PF02347">
    <property type="entry name" value="GDC-P"/>
    <property type="match status" value="2"/>
</dbReference>
<dbReference type="SUPFAM" id="SSF53383">
    <property type="entry name" value="PLP-dependent transferases"/>
    <property type="match status" value="2"/>
</dbReference>
<organism>
    <name type="scientific">Escherichia coli O8 (strain IAI1)</name>
    <dbReference type="NCBI Taxonomy" id="585034"/>
    <lineage>
        <taxon>Bacteria</taxon>
        <taxon>Pseudomonadati</taxon>
        <taxon>Pseudomonadota</taxon>
        <taxon>Gammaproteobacteria</taxon>
        <taxon>Enterobacterales</taxon>
        <taxon>Enterobacteriaceae</taxon>
        <taxon>Escherichia</taxon>
    </lineage>
</organism>
<feature type="chain" id="PRO_1000132437" description="Glycine dehydrogenase (decarboxylating)">
    <location>
        <begin position="1"/>
        <end position="957"/>
    </location>
</feature>
<feature type="modified residue" description="N6-(pyridoxal phosphate)lysine" evidence="1">
    <location>
        <position position="708"/>
    </location>
</feature>
<reference key="1">
    <citation type="journal article" date="2009" name="PLoS Genet.">
        <title>Organised genome dynamics in the Escherichia coli species results in highly diverse adaptive paths.</title>
        <authorList>
            <person name="Touchon M."/>
            <person name="Hoede C."/>
            <person name="Tenaillon O."/>
            <person name="Barbe V."/>
            <person name="Baeriswyl S."/>
            <person name="Bidet P."/>
            <person name="Bingen E."/>
            <person name="Bonacorsi S."/>
            <person name="Bouchier C."/>
            <person name="Bouvet O."/>
            <person name="Calteau A."/>
            <person name="Chiapello H."/>
            <person name="Clermont O."/>
            <person name="Cruveiller S."/>
            <person name="Danchin A."/>
            <person name="Diard M."/>
            <person name="Dossat C."/>
            <person name="Karoui M.E."/>
            <person name="Frapy E."/>
            <person name="Garry L."/>
            <person name="Ghigo J.M."/>
            <person name="Gilles A.M."/>
            <person name="Johnson J."/>
            <person name="Le Bouguenec C."/>
            <person name="Lescat M."/>
            <person name="Mangenot S."/>
            <person name="Martinez-Jehanne V."/>
            <person name="Matic I."/>
            <person name="Nassif X."/>
            <person name="Oztas S."/>
            <person name="Petit M.A."/>
            <person name="Pichon C."/>
            <person name="Rouy Z."/>
            <person name="Ruf C.S."/>
            <person name="Schneider D."/>
            <person name="Tourret J."/>
            <person name="Vacherie B."/>
            <person name="Vallenet D."/>
            <person name="Medigue C."/>
            <person name="Rocha E.P.C."/>
            <person name="Denamur E."/>
        </authorList>
    </citation>
    <scope>NUCLEOTIDE SEQUENCE [LARGE SCALE GENOMIC DNA]</scope>
    <source>
        <strain>IAI1</strain>
    </source>
</reference>
<sequence length="957" mass="104391">MTQTLSQLENSGAFIERHIGPDAAQQQEMLNAVGAQSLNALTGQIVPKDIQLATPPQVGAPATEYAALAELKAIASRNKRFTSYIGMGYTAVQLPPVILRNMLENPGWYTAYTPYQPEVSQGRLEALLNFQQVTLDLTGLDMASASLLDEATAAAEAMAMAKRVSKLKNANRFFVASDVHPQTLDVVRTRAETFGFEVIVDDAQKVLDHQDVFGVLLQQVGTTGEIHDYTALISELKSRKIVVSVAADIMALVLLTAPGKQGADIVFGSAQRFGVPMGYGGPHAAFFAAKDEYKRSMPGRIIGVSKDAAGNTALRMAMQTREQHIRREKANSNICTSQVLLANIASLYAVYHGPVGLKRIANRIHRLTDILAAGLQQKGLKLRHAHYFDTLCVEVADKAGVLARAEAAEINLRSDILNAVGITLDETTTRENVMQLFSVLLGDNHGLEIDTLDKDVAHDSRSIQPAMLRDDEILTHPVFNRYHSETEMMRYMHSLERKDLALNQAMIPLGSCTMKLNAAAEMIPITWQEFAELHPFCPPEQAEGYQQMIAQLADWLVKLTGYDAVCMQPNSGAQGEYAGLLAIRHYHESRNEGHRDICLIPASAHGTNPASAHMAGMQVVVVACDKNGNIDLTDLRAKAEQAGDNLSCIMVTYPSTHGVYEETIREVCEVVHQFGGQVYLDGANMNAQVGITSPGFIGADVSHLNLHKTFCIPHGGGGPGMGPIGVKAHLAPFVPGHSVVQIEGMLTRQGAVSAAPFGSASILPISWMYIRMMGAEGLKKASQVAILNANYIASRLQDAFPVLYTGRDGRVAHECILDIRPLKEETGISELDIAKRLIDYGFHAPTMSFPVAGTLMVEPTESESKVELDRFIDAMLAIRAEIDQVKAGVWPLEDNPLVNAPHIQNELVAEWAHPYSREVAVFPAGVADKYWPTVKRLDDVYGDRNLFCSCVPISEYQ</sequence>
<comment type="function">
    <text evidence="1">The glycine cleavage system catalyzes the degradation of glycine. The P protein binds the alpha-amino group of glycine through its pyridoxal phosphate cofactor; CO(2) is released and the remaining methylamine moiety is then transferred to the lipoamide cofactor of the H protein.</text>
</comment>
<comment type="catalytic activity">
    <reaction evidence="1">
        <text>N(6)-[(R)-lipoyl]-L-lysyl-[glycine-cleavage complex H protein] + glycine + H(+) = N(6)-[(R)-S(8)-aminomethyldihydrolipoyl]-L-lysyl-[glycine-cleavage complex H protein] + CO2</text>
        <dbReference type="Rhea" id="RHEA:24304"/>
        <dbReference type="Rhea" id="RHEA-COMP:10494"/>
        <dbReference type="Rhea" id="RHEA-COMP:10495"/>
        <dbReference type="ChEBI" id="CHEBI:15378"/>
        <dbReference type="ChEBI" id="CHEBI:16526"/>
        <dbReference type="ChEBI" id="CHEBI:57305"/>
        <dbReference type="ChEBI" id="CHEBI:83099"/>
        <dbReference type="ChEBI" id="CHEBI:83143"/>
        <dbReference type="EC" id="1.4.4.2"/>
    </reaction>
</comment>
<comment type="cofactor">
    <cofactor evidence="1">
        <name>pyridoxal 5'-phosphate</name>
        <dbReference type="ChEBI" id="CHEBI:597326"/>
    </cofactor>
</comment>
<comment type="subunit">
    <text evidence="1">The glycine cleavage system is composed of four proteins: P, T, L and H.</text>
</comment>
<comment type="similarity">
    <text evidence="1">Belongs to the GcvP family.</text>
</comment>
<accession>B7LYG7</accession>
<name>GCSP_ECO8A</name>
<gene>
    <name evidence="1" type="primary">gcvP</name>
    <name type="ordered locus">ECIAI1_3022</name>
</gene>
<keyword id="KW-0560">Oxidoreductase</keyword>
<keyword id="KW-0663">Pyridoxal phosphate</keyword>
<protein>
    <recommendedName>
        <fullName evidence="1">Glycine dehydrogenase (decarboxylating)</fullName>
        <ecNumber evidence="1">1.4.4.2</ecNumber>
    </recommendedName>
    <alternativeName>
        <fullName evidence="1">Glycine cleavage system P-protein</fullName>
    </alternativeName>
    <alternativeName>
        <fullName evidence="1">Glycine decarboxylase</fullName>
    </alternativeName>
    <alternativeName>
        <fullName evidence="1">Glycine dehydrogenase (aminomethyl-transferring)</fullName>
    </alternativeName>
</protein>
<evidence type="ECO:0000255" key="1">
    <source>
        <dbReference type="HAMAP-Rule" id="MF_00711"/>
    </source>
</evidence>